<protein>
    <recommendedName>
        <fullName evidence="1">Nickel-responsive regulator</fullName>
    </recommendedName>
</protein>
<sequence>MQRVTITLDDDLLETLDNLSQRRGYNNRSEAIRDILRGALAQEATQEHGTQGFAVLSYVYEHEKRDLASRIVSTQHHHHDLSVATLHVHINHDDCLEIAVLKGDMGDVQHFADDVIAQRGVRHGHLQCLPKED</sequence>
<accession>B5BHM4</accession>
<comment type="function">
    <text evidence="1">Transcriptional repressor of the nikABCDE operon. Is active in the presence of excessive concentrations of intracellular nickel.</text>
</comment>
<comment type="cofactor">
    <cofactor evidence="1">
        <name>Ni(2+)</name>
        <dbReference type="ChEBI" id="CHEBI:49786"/>
    </cofactor>
    <text evidence="1">Binds 1 nickel ion per subunit.</text>
</comment>
<comment type="subunit">
    <text evidence="1">Homotetramer.</text>
</comment>
<comment type="similarity">
    <text evidence="1">Belongs to the transcriptional regulatory CopG/NikR family.</text>
</comment>
<organism>
    <name type="scientific">Salmonella paratyphi A (strain AKU_12601)</name>
    <dbReference type="NCBI Taxonomy" id="554290"/>
    <lineage>
        <taxon>Bacteria</taxon>
        <taxon>Pseudomonadati</taxon>
        <taxon>Pseudomonadota</taxon>
        <taxon>Gammaproteobacteria</taxon>
        <taxon>Enterobacterales</taxon>
        <taxon>Enterobacteriaceae</taxon>
        <taxon>Salmonella</taxon>
    </lineage>
</organism>
<dbReference type="EMBL" id="FM200053">
    <property type="protein sequence ID" value="CAR61463.1"/>
    <property type="molecule type" value="Genomic_DNA"/>
</dbReference>
<dbReference type="RefSeq" id="WP_011233197.1">
    <property type="nucleotide sequence ID" value="NC_011147.1"/>
</dbReference>
<dbReference type="SMR" id="B5BHM4"/>
<dbReference type="KEGG" id="sek:SSPA3207"/>
<dbReference type="HOGENOM" id="CLU_113319_1_4_6"/>
<dbReference type="Proteomes" id="UP000001869">
    <property type="component" value="Chromosome"/>
</dbReference>
<dbReference type="GO" id="GO:0003700">
    <property type="term" value="F:DNA-binding transcription factor activity"/>
    <property type="evidence" value="ECO:0007669"/>
    <property type="project" value="UniProtKB-UniRule"/>
</dbReference>
<dbReference type="GO" id="GO:0016151">
    <property type="term" value="F:nickel cation binding"/>
    <property type="evidence" value="ECO:0007669"/>
    <property type="project" value="UniProtKB-UniRule"/>
</dbReference>
<dbReference type="GO" id="GO:0043565">
    <property type="term" value="F:sequence-specific DNA binding"/>
    <property type="evidence" value="ECO:0007669"/>
    <property type="project" value="UniProtKB-ARBA"/>
</dbReference>
<dbReference type="GO" id="GO:0010045">
    <property type="term" value="P:response to nickel cation"/>
    <property type="evidence" value="ECO:0007669"/>
    <property type="project" value="InterPro"/>
</dbReference>
<dbReference type="CDD" id="cd22231">
    <property type="entry name" value="RHH_NikR_HicB-like"/>
    <property type="match status" value="1"/>
</dbReference>
<dbReference type="FunFam" id="1.10.1220.10:FF:000001">
    <property type="entry name" value="Nickel-responsive regulator"/>
    <property type="match status" value="1"/>
</dbReference>
<dbReference type="FunFam" id="3.30.70.1150:FF:000002">
    <property type="entry name" value="Nickel-responsive regulator"/>
    <property type="match status" value="1"/>
</dbReference>
<dbReference type="Gene3D" id="3.30.70.1150">
    <property type="entry name" value="ACT-like. Chain A, domain 2"/>
    <property type="match status" value="1"/>
</dbReference>
<dbReference type="Gene3D" id="1.10.1220.10">
    <property type="entry name" value="Met repressor-like"/>
    <property type="match status" value="1"/>
</dbReference>
<dbReference type="HAMAP" id="MF_00476">
    <property type="entry name" value="NikR"/>
    <property type="match status" value="1"/>
</dbReference>
<dbReference type="InterPro" id="IPR027271">
    <property type="entry name" value="Acetolactate_synth/TF_NikR_C"/>
</dbReference>
<dbReference type="InterPro" id="IPR045865">
    <property type="entry name" value="ACT-like_dom_sf"/>
</dbReference>
<dbReference type="InterPro" id="IPR013321">
    <property type="entry name" value="Arc_rbn_hlx_hlx"/>
</dbReference>
<dbReference type="InterPro" id="IPR002145">
    <property type="entry name" value="CopG"/>
</dbReference>
<dbReference type="InterPro" id="IPR050192">
    <property type="entry name" value="CopG/NikR_regulator"/>
</dbReference>
<dbReference type="InterPro" id="IPR022988">
    <property type="entry name" value="Ni_resp_reg_NikR"/>
</dbReference>
<dbReference type="InterPro" id="IPR014160">
    <property type="entry name" value="Nickel_NikR_proteobac"/>
</dbReference>
<dbReference type="InterPro" id="IPR010985">
    <property type="entry name" value="Ribbon_hlx_hlx"/>
</dbReference>
<dbReference type="InterPro" id="IPR014864">
    <property type="entry name" value="TF_NikR_Ni-bd_C"/>
</dbReference>
<dbReference type="NCBIfam" id="TIGR02793">
    <property type="entry name" value="nikR"/>
    <property type="match status" value="1"/>
</dbReference>
<dbReference type="NCBIfam" id="NF002815">
    <property type="entry name" value="PRK02967.1"/>
    <property type="match status" value="1"/>
</dbReference>
<dbReference type="NCBIfam" id="NF003381">
    <property type="entry name" value="PRK04460.1"/>
    <property type="match status" value="1"/>
</dbReference>
<dbReference type="PANTHER" id="PTHR34719">
    <property type="entry name" value="NICKEL-RESPONSIVE REGULATOR"/>
    <property type="match status" value="1"/>
</dbReference>
<dbReference type="PANTHER" id="PTHR34719:SF2">
    <property type="entry name" value="NICKEL-RESPONSIVE REGULATOR"/>
    <property type="match status" value="1"/>
</dbReference>
<dbReference type="Pfam" id="PF08753">
    <property type="entry name" value="NikR_C"/>
    <property type="match status" value="1"/>
</dbReference>
<dbReference type="Pfam" id="PF01402">
    <property type="entry name" value="RHH_1"/>
    <property type="match status" value="1"/>
</dbReference>
<dbReference type="SUPFAM" id="SSF55021">
    <property type="entry name" value="ACT-like"/>
    <property type="match status" value="1"/>
</dbReference>
<dbReference type="SUPFAM" id="SSF47598">
    <property type="entry name" value="Ribbon-helix-helix"/>
    <property type="match status" value="1"/>
</dbReference>
<keyword id="KW-0238">DNA-binding</keyword>
<keyword id="KW-0479">Metal-binding</keyword>
<keyword id="KW-0533">Nickel</keyword>
<keyword id="KW-0678">Repressor</keyword>
<keyword id="KW-0804">Transcription</keyword>
<keyword id="KW-0805">Transcription regulation</keyword>
<proteinExistence type="inferred from homology"/>
<name>NIKR_SALPK</name>
<evidence type="ECO:0000255" key="1">
    <source>
        <dbReference type="HAMAP-Rule" id="MF_00476"/>
    </source>
</evidence>
<reference key="1">
    <citation type="journal article" date="2009" name="BMC Genomics">
        <title>Pseudogene accumulation in the evolutionary histories of Salmonella enterica serovars Paratyphi A and Typhi.</title>
        <authorList>
            <person name="Holt K.E."/>
            <person name="Thomson N.R."/>
            <person name="Wain J."/>
            <person name="Langridge G.C."/>
            <person name="Hasan R."/>
            <person name="Bhutta Z.A."/>
            <person name="Quail M.A."/>
            <person name="Norbertczak H."/>
            <person name="Walker D."/>
            <person name="Simmonds M."/>
            <person name="White B."/>
            <person name="Bason N."/>
            <person name="Mungall K."/>
            <person name="Dougan G."/>
            <person name="Parkhill J."/>
        </authorList>
    </citation>
    <scope>NUCLEOTIDE SEQUENCE [LARGE SCALE GENOMIC DNA]</scope>
    <source>
        <strain>AKU_12601</strain>
    </source>
</reference>
<gene>
    <name evidence="1" type="primary">nikR</name>
    <name type="ordered locus">SSPA3207</name>
</gene>
<feature type="chain" id="PRO_1000125840" description="Nickel-responsive regulator">
    <location>
        <begin position="1"/>
        <end position="133"/>
    </location>
</feature>
<feature type="binding site" evidence="1">
    <location>
        <position position="76"/>
    </location>
    <ligand>
        <name>Ni(2+)</name>
        <dbReference type="ChEBI" id="CHEBI:49786"/>
    </ligand>
</feature>
<feature type="binding site" evidence="1">
    <location>
        <position position="87"/>
    </location>
    <ligand>
        <name>Ni(2+)</name>
        <dbReference type="ChEBI" id="CHEBI:49786"/>
    </ligand>
</feature>
<feature type="binding site" evidence="1">
    <location>
        <position position="89"/>
    </location>
    <ligand>
        <name>Ni(2+)</name>
        <dbReference type="ChEBI" id="CHEBI:49786"/>
    </ligand>
</feature>
<feature type="binding site" evidence="1">
    <location>
        <position position="95"/>
    </location>
    <ligand>
        <name>Ni(2+)</name>
        <dbReference type="ChEBI" id="CHEBI:49786"/>
    </ligand>
</feature>